<proteinExistence type="inferred from homology"/>
<name>SYS_ELUMP</name>
<protein>
    <recommendedName>
        <fullName evidence="1">Serine--tRNA ligase</fullName>
        <ecNumber evidence="1">6.1.1.11</ecNumber>
    </recommendedName>
    <alternativeName>
        <fullName evidence="1">Seryl-tRNA synthetase</fullName>
        <shortName evidence="1">SerRS</shortName>
    </alternativeName>
    <alternativeName>
        <fullName evidence="1">Seryl-tRNA(Ser/Sec) synthetase</fullName>
    </alternativeName>
</protein>
<dbReference type="EC" id="6.1.1.11" evidence="1"/>
<dbReference type="EMBL" id="CP001055">
    <property type="protein sequence ID" value="ACC99051.1"/>
    <property type="molecule type" value="Genomic_DNA"/>
</dbReference>
<dbReference type="RefSeq" id="WP_012415665.1">
    <property type="nucleotide sequence ID" value="NC_010644.1"/>
</dbReference>
<dbReference type="SMR" id="B2KEV5"/>
<dbReference type="STRING" id="445932.Emin_1503"/>
<dbReference type="KEGG" id="emi:Emin_1503"/>
<dbReference type="HOGENOM" id="CLU_023797_1_1_0"/>
<dbReference type="OrthoDB" id="9804647at2"/>
<dbReference type="UniPathway" id="UPA00906">
    <property type="reaction ID" value="UER00895"/>
</dbReference>
<dbReference type="Proteomes" id="UP000001029">
    <property type="component" value="Chromosome"/>
</dbReference>
<dbReference type="GO" id="GO:0005737">
    <property type="term" value="C:cytoplasm"/>
    <property type="evidence" value="ECO:0007669"/>
    <property type="project" value="UniProtKB-SubCell"/>
</dbReference>
<dbReference type="GO" id="GO:0005524">
    <property type="term" value="F:ATP binding"/>
    <property type="evidence" value="ECO:0007669"/>
    <property type="project" value="UniProtKB-UniRule"/>
</dbReference>
<dbReference type="GO" id="GO:0004828">
    <property type="term" value="F:serine-tRNA ligase activity"/>
    <property type="evidence" value="ECO:0007669"/>
    <property type="project" value="UniProtKB-UniRule"/>
</dbReference>
<dbReference type="GO" id="GO:0016260">
    <property type="term" value="P:selenocysteine biosynthetic process"/>
    <property type="evidence" value="ECO:0007669"/>
    <property type="project" value="UniProtKB-UniRule"/>
</dbReference>
<dbReference type="GO" id="GO:0006434">
    <property type="term" value="P:seryl-tRNA aminoacylation"/>
    <property type="evidence" value="ECO:0007669"/>
    <property type="project" value="UniProtKB-UniRule"/>
</dbReference>
<dbReference type="CDD" id="cd00770">
    <property type="entry name" value="SerRS_core"/>
    <property type="match status" value="1"/>
</dbReference>
<dbReference type="Gene3D" id="3.30.930.10">
    <property type="entry name" value="Bira Bifunctional Protein, Domain 2"/>
    <property type="match status" value="1"/>
</dbReference>
<dbReference type="Gene3D" id="1.10.287.40">
    <property type="entry name" value="Serine-tRNA synthetase, tRNA binding domain"/>
    <property type="match status" value="1"/>
</dbReference>
<dbReference type="HAMAP" id="MF_00176">
    <property type="entry name" value="Ser_tRNA_synth_type1"/>
    <property type="match status" value="1"/>
</dbReference>
<dbReference type="InterPro" id="IPR002314">
    <property type="entry name" value="aa-tRNA-synt_IIb"/>
</dbReference>
<dbReference type="InterPro" id="IPR006195">
    <property type="entry name" value="aa-tRNA-synth_II"/>
</dbReference>
<dbReference type="InterPro" id="IPR045864">
    <property type="entry name" value="aa-tRNA-synth_II/BPL/LPL"/>
</dbReference>
<dbReference type="InterPro" id="IPR002317">
    <property type="entry name" value="Ser-tRNA-ligase_type_1"/>
</dbReference>
<dbReference type="InterPro" id="IPR015866">
    <property type="entry name" value="Ser-tRNA-synth_1_N"/>
</dbReference>
<dbReference type="InterPro" id="IPR042103">
    <property type="entry name" value="SerRS_1_N_sf"/>
</dbReference>
<dbReference type="InterPro" id="IPR033729">
    <property type="entry name" value="SerRS_core"/>
</dbReference>
<dbReference type="InterPro" id="IPR010978">
    <property type="entry name" value="tRNA-bd_arm"/>
</dbReference>
<dbReference type="NCBIfam" id="TIGR00414">
    <property type="entry name" value="serS"/>
    <property type="match status" value="1"/>
</dbReference>
<dbReference type="PANTHER" id="PTHR43697:SF1">
    <property type="entry name" value="SERINE--TRNA LIGASE"/>
    <property type="match status" value="1"/>
</dbReference>
<dbReference type="PANTHER" id="PTHR43697">
    <property type="entry name" value="SERYL-TRNA SYNTHETASE"/>
    <property type="match status" value="1"/>
</dbReference>
<dbReference type="Pfam" id="PF02403">
    <property type="entry name" value="Seryl_tRNA_N"/>
    <property type="match status" value="1"/>
</dbReference>
<dbReference type="Pfam" id="PF00587">
    <property type="entry name" value="tRNA-synt_2b"/>
    <property type="match status" value="1"/>
</dbReference>
<dbReference type="PIRSF" id="PIRSF001529">
    <property type="entry name" value="Ser-tRNA-synth_IIa"/>
    <property type="match status" value="1"/>
</dbReference>
<dbReference type="PRINTS" id="PR00981">
    <property type="entry name" value="TRNASYNTHSER"/>
</dbReference>
<dbReference type="SUPFAM" id="SSF55681">
    <property type="entry name" value="Class II aaRS and biotin synthetases"/>
    <property type="match status" value="1"/>
</dbReference>
<dbReference type="SUPFAM" id="SSF46589">
    <property type="entry name" value="tRNA-binding arm"/>
    <property type="match status" value="1"/>
</dbReference>
<dbReference type="PROSITE" id="PS50862">
    <property type="entry name" value="AA_TRNA_LIGASE_II"/>
    <property type="match status" value="1"/>
</dbReference>
<organism>
    <name type="scientific">Elusimicrobium minutum (strain Pei191)</name>
    <dbReference type="NCBI Taxonomy" id="445932"/>
    <lineage>
        <taxon>Bacteria</taxon>
        <taxon>Pseudomonadati</taxon>
        <taxon>Elusimicrobiota</taxon>
        <taxon>Elusimicrobia</taxon>
        <taxon>Elusimicrobiales</taxon>
        <taxon>Elusimicrobiaceae</taxon>
        <taxon>Elusimicrobium</taxon>
    </lineage>
</organism>
<reference key="1">
    <citation type="journal article" date="2009" name="Appl. Environ. Microbiol.">
        <title>Genomic analysis of 'Elusimicrobium minutum,' the first cultivated representative of the phylum 'Elusimicrobia' (formerly termite group 1).</title>
        <authorList>
            <person name="Herlemann D.P.R."/>
            <person name="Geissinger O."/>
            <person name="Ikeda-Ohtsubo W."/>
            <person name="Kunin V."/>
            <person name="Sun H."/>
            <person name="Lapidus A."/>
            <person name="Hugenholtz P."/>
            <person name="Brune A."/>
        </authorList>
    </citation>
    <scope>NUCLEOTIDE SEQUENCE [LARGE SCALE GENOMIC DNA]</scope>
    <source>
        <strain>Pei191</strain>
    </source>
</reference>
<accession>B2KEV5</accession>
<sequence>MLDIKLFANDLEGVKKSLASRNPALLTLVGEITELNKTYKELLTSVENMRAKRNELSKSVGILKQKDPAAAEEAMKEVSLIKTGMSEKENMLEEIKKKISNTMLNIPNMPDPSVTIGKDEKDNKEIRKDGAAPSFSFKPLDHHAVGEKLGILDFETAAVLSGSRFALLKGDGARLERALISYMLDKHAKKGYTEVVPPSIVNEEILIGTGQLPKFREDMYALEGEPKQFLISTAEIPLTNMNRGKVLQEAELPVKLTAGTPCFRKEAGTYGKDTRGLIRNHQFDKVELVMISNSNDSFNLLEAMTADAEDVLKGLGLAYRTVELCTGDMGFSSAKTYDIEVWMPSENKYREISSCSNCTSFQARRMNLRYKNAEGKIEFVHTLNGSGVAVGRALAAILENYQQEDGSVIVPEALRPYFGKDIIK</sequence>
<feature type="chain" id="PRO_1000098066" description="Serine--tRNA ligase">
    <location>
        <begin position="1"/>
        <end position="424"/>
    </location>
</feature>
<feature type="binding site" evidence="1">
    <location>
        <begin position="233"/>
        <end position="235"/>
    </location>
    <ligand>
        <name>L-serine</name>
        <dbReference type="ChEBI" id="CHEBI:33384"/>
    </ligand>
</feature>
<feature type="binding site" evidence="1">
    <location>
        <begin position="264"/>
        <end position="266"/>
    </location>
    <ligand>
        <name>ATP</name>
        <dbReference type="ChEBI" id="CHEBI:30616"/>
    </ligand>
</feature>
<feature type="binding site" evidence="1">
    <location>
        <position position="287"/>
    </location>
    <ligand>
        <name>L-serine</name>
        <dbReference type="ChEBI" id="CHEBI:33384"/>
    </ligand>
</feature>
<feature type="binding site" evidence="1">
    <location>
        <begin position="351"/>
        <end position="354"/>
    </location>
    <ligand>
        <name>ATP</name>
        <dbReference type="ChEBI" id="CHEBI:30616"/>
    </ligand>
</feature>
<feature type="binding site" evidence="1">
    <location>
        <position position="386"/>
    </location>
    <ligand>
        <name>L-serine</name>
        <dbReference type="ChEBI" id="CHEBI:33384"/>
    </ligand>
</feature>
<evidence type="ECO:0000255" key="1">
    <source>
        <dbReference type="HAMAP-Rule" id="MF_00176"/>
    </source>
</evidence>
<comment type="function">
    <text evidence="1">Catalyzes the attachment of serine to tRNA(Ser). Is also able to aminoacylate tRNA(Sec) with serine, to form the misacylated tRNA L-seryl-tRNA(Sec), which will be further converted into selenocysteinyl-tRNA(Sec).</text>
</comment>
<comment type="catalytic activity">
    <reaction evidence="1">
        <text>tRNA(Ser) + L-serine + ATP = L-seryl-tRNA(Ser) + AMP + diphosphate + H(+)</text>
        <dbReference type="Rhea" id="RHEA:12292"/>
        <dbReference type="Rhea" id="RHEA-COMP:9669"/>
        <dbReference type="Rhea" id="RHEA-COMP:9703"/>
        <dbReference type="ChEBI" id="CHEBI:15378"/>
        <dbReference type="ChEBI" id="CHEBI:30616"/>
        <dbReference type="ChEBI" id="CHEBI:33019"/>
        <dbReference type="ChEBI" id="CHEBI:33384"/>
        <dbReference type="ChEBI" id="CHEBI:78442"/>
        <dbReference type="ChEBI" id="CHEBI:78533"/>
        <dbReference type="ChEBI" id="CHEBI:456215"/>
        <dbReference type="EC" id="6.1.1.11"/>
    </reaction>
</comment>
<comment type="catalytic activity">
    <reaction evidence="1">
        <text>tRNA(Sec) + L-serine + ATP = L-seryl-tRNA(Sec) + AMP + diphosphate + H(+)</text>
        <dbReference type="Rhea" id="RHEA:42580"/>
        <dbReference type="Rhea" id="RHEA-COMP:9742"/>
        <dbReference type="Rhea" id="RHEA-COMP:10128"/>
        <dbReference type="ChEBI" id="CHEBI:15378"/>
        <dbReference type="ChEBI" id="CHEBI:30616"/>
        <dbReference type="ChEBI" id="CHEBI:33019"/>
        <dbReference type="ChEBI" id="CHEBI:33384"/>
        <dbReference type="ChEBI" id="CHEBI:78442"/>
        <dbReference type="ChEBI" id="CHEBI:78533"/>
        <dbReference type="ChEBI" id="CHEBI:456215"/>
        <dbReference type="EC" id="6.1.1.11"/>
    </reaction>
</comment>
<comment type="pathway">
    <text evidence="1">Aminoacyl-tRNA biosynthesis; selenocysteinyl-tRNA(Sec) biosynthesis; L-seryl-tRNA(Sec) from L-serine and tRNA(Sec): step 1/1.</text>
</comment>
<comment type="subunit">
    <text evidence="1">Homodimer. The tRNA molecule binds across the dimer.</text>
</comment>
<comment type="subcellular location">
    <subcellularLocation>
        <location evidence="1">Cytoplasm</location>
    </subcellularLocation>
</comment>
<comment type="domain">
    <text evidence="1">Consists of two distinct domains, a catalytic core and a N-terminal extension that is involved in tRNA binding.</text>
</comment>
<comment type="similarity">
    <text evidence="1">Belongs to the class-II aminoacyl-tRNA synthetase family. Type-1 seryl-tRNA synthetase subfamily.</text>
</comment>
<keyword id="KW-0030">Aminoacyl-tRNA synthetase</keyword>
<keyword id="KW-0067">ATP-binding</keyword>
<keyword id="KW-0963">Cytoplasm</keyword>
<keyword id="KW-0436">Ligase</keyword>
<keyword id="KW-0547">Nucleotide-binding</keyword>
<keyword id="KW-0648">Protein biosynthesis</keyword>
<keyword id="KW-1185">Reference proteome</keyword>
<gene>
    <name evidence="1" type="primary">serS</name>
    <name type="ordered locus">Emin_1503</name>
</gene>